<proteinExistence type="inferred from homology"/>
<accession>A1VAK4</accession>
<feature type="chain" id="PRO_1000015652" description="Elongation factor Tu">
    <location>
        <begin position="1"/>
        <end position="397"/>
    </location>
</feature>
<feature type="domain" description="tr-type G">
    <location>
        <begin position="10"/>
        <end position="207"/>
    </location>
</feature>
<feature type="region of interest" description="G1" evidence="1">
    <location>
        <begin position="19"/>
        <end position="26"/>
    </location>
</feature>
<feature type="region of interest" description="G2" evidence="1">
    <location>
        <begin position="60"/>
        <end position="64"/>
    </location>
</feature>
<feature type="region of interest" description="G3" evidence="1">
    <location>
        <begin position="81"/>
        <end position="84"/>
    </location>
</feature>
<feature type="region of interest" description="G4" evidence="1">
    <location>
        <begin position="136"/>
        <end position="139"/>
    </location>
</feature>
<feature type="region of interest" description="G5" evidence="1">
    <location>
        <begin position="174"/>
        <end position="176"/>
    </location>
</feature>
<feature type="binding site" evidence="2">
    <location>
        <begin position="19"/>
        <end position="26"/>
    </location>
    <ligand>
        <name>GTP</name>
        <dbReference type="ChEBI" id="CHEBI:37565"/>
    </ligand>
</feature>
<feature type="binding site" evidence="2">
    <location>
        <position position="26"/>
    </location>
    <ligand>
        <name>Mg(2+)</name>
        <dbReference type="ChEBI" id="CHEBI:18420"/>
    </ligand>
</feature>
<feature type="binding site" evidence="2">
    <location>
        <begin position="81"/>
        <end position="85"/>
    </location>
    <ligand>
        <name>GTP</name>
        <dbReference type="ChEBI" id="CHEBI:37565"/>
    </ligand>
</feature>
<feature type="binding site" evidence="2">
    <location>
        <begin position="136"/>
        <end position="139"/>
    </location>
    <ligand>
        <name>GTP</name>
        <dbReference type="ChEBI" id="CHEBI:37565"/>
    </ligand>
</feature>
<evidence type="ECO:0000250" key="1"/>
<evidence type="ECO:0000255" key="2">
    <source>
        <dbReference type="HAMAP-Rule" id="MF_00118"/>
    </source>
</evidence>
<protein>
    <recommendedName>
        <fullName evidence="2">Elongation factor Tu</fullName>
        <shortName evidence="2">EF-Tu</shortName>
        <ecNumber evidence="2">3.6.5.3</ecNumber>
    </recommendedName>
</protein>
<dbReference type="EC" id="3.6.5.3" evidence="2"/>
<dbReference type="EMBL" id="CP000527">
    <property type="protein sequence ID" value="ABM27470.1"/>
    <property type="molecule type" value="Genomic_DNA"/>
</dbReference>
<dbReference type="RefSeq" id="WP_010940180.1">
    <property type="nucleotide sequence ID" value="NC_008751.1"/>
</dbReference>
<dbReference type="SMR" id="A1VAK4"/>
<dbReference type="KEGG" id="dvl:Dvul_0447"/>
<dbReference type="HOGENOM" id="CLU_007265_0_0_7"/>
<dbReference type="Proteomes" id="UP000009173">
    <property type="component" value="Chromosome"/>
</dbReference>
<dbReference type="GO" id="GO:0005829">
    <property type="term" value="C:cytosol"/>
    <property type="evidence" value="ECO:0007669"/>
    <property type="project" value="TreeGrafter"/>
</dbReference>
<dbReference type="GO" id="GO:0005525">
    <property type="term" value="F:GTP binding"/>
    <property type="evidence" value="ECO:0007669"/>
    <property type="project" value="UniProtKB-UniRule"/>
</dbReference>
<dbReference type="GO" id="GO:0003924">
    <property type="term" value="F:GTPase activity"/>
    <property type="evidence" value="ECO:0007669"/>
    <property type="project" value="InterPro"/>
</dbReference>
<dbReference type="GO" id="GO:0003746">
    <property type="term" value="F:translation elongation factor activity"/>
    <property type="evidence" value="ECO:0007669"/>
    <property type="project" value="UniProtKB-UniRule"/>
</dbReference>
<dbReference type="CDD" id="cd01884">
    <property type="entry name" value="EF_Tu"/>
    <property type="match status" value="1"/>
</dbReference>
<dbReference type="CDD" id="cd03697">
    <property type="entry name" value="EFTU_II"/>
    <property type="match status" value="1"/>
</dbReference>
<dbReference type="CDD" id="cd03707">
    <property type="entry name" value="EFTU_III"/>
    <property type="match status" value="1"/>
</dbReference>
<dbReference type="FunFam" id="2.40.30.10:FF:000001">
    <property type="entry name" value="Elongation factor Tu"/>
    <property type="match status" value="1"/>
</dbReference>
<dbReference type="FunFam" id="3.40.50.300:FF:000003">
    <property type="entry name" value="Elongation factor Tu"/>
    <property type="match status" value="1"/>
</dbReference>
<dbReference type="Gene3D" id="3.40.50.300">
    <property type="entry name" value="P-loop containing nucleotide triphosphate hydrolases"/>
    <property type="match status" value="1"/>
</dbReference>
<dbReference type="Gene3D" id="2.40.30.10">
    <property type="entry name" value="Translation factors"/>
    <property type="match status" value="2"/>
</dbReference>
<dbReference type="HAMAP" id="MF_00118_B">
    <property type="entry name" value="EF_Tu_B"/>
    <property type="match status" value="1"/>
</dbReference>
<dbReference type="InterPro" id="IPR041709">
    <property type="entry name" value="EF-Tu_GTP-bd"/>
</dbReference>
<dbReference type="InterPro" id="IPR050055">
    <property type="entry name" value="EF-Tu_GTPase"/>
</dbReference>
<dbReference type="InterPro" id="IPR004161">
    <property type="entry name" value="EFTu-like_2"/>
</dbReference>
<dbReference type="InterPro" id="IPR033720">
    <property type="entry name" value="EFTU_2"/>
</dbReference>
<dbReference type="InterPro" id="IPR031157">
    <property type="entry name" value="G_TR_CS"/>
</dbReference>
<dbReference type="InterPro" id="IPR027417">
    <property type="entry name" value="P-loop_NTPase"/>
</dbReference>
<dbReference type="InterPro" id="IPR005225">
    <property type="entry name" value="Small_GTP-bd"/>
</dbReference>
<dbReference type="InterPro" id="IPR000795">
    <property type="entry name" value="T_Tr_GTP-bd_dom"/>
</dbReference>
<dbReference type="InterPro" id="IPR009000">
    <property type="entry name" value="Transl_B-barrel_sf"/>
</dbReference>
<dbReference type="InterPro" id="IPR009001">
    <property type="entry name" value="Transl_elong_EF1A/Init_IF2_C"/>
</dbReference>
<dbReference type="InterPro" id="IPR004541">
    <property type="entry name" value="Transl_elong_EFTu/EF1A_bac/org"/>
</dbReference>
<dbReference type="InterPro" id="IPR004160">
    <property type="entry name" value="Transl_elong_EFTu/EF1A_C"/>
</dbReference>
<dbReference type="NCBIfam" id="TIGR00485">
    <property type="entry name" value="EF-Tu"/>
    <property type="match status" value="1"/>
</dbReference>
<dbReference type="NCBIfam" id="NF000766">
    <property type="entry name" value="PRK00049.1"/>
    <property type="match status" value="1"/>
</dbReference>
<dbReference type="NCBIfam" id="NF009372">
    <property type="entry name" value="PRK12735.1"/>
    <property type="match status" value="1"/>
</dbReference>
<dbReference type="NCBIfam" id="NF009373">
    <property type="entry name" value="PRK12736.1"/>
    <property type="match status" value="1"/>
</dbReference>
<dbReference type="NCBIfam" id="TIGR00231">
    <property type="entry name" value="small_GTP"/>
    <property type="match status" value="1"/>
</dbReference>
<dbReference type="PANTHER" id="PTHR43721:SF22">
    <property type="entry name" value="ELONGATION FACTOR TU, MITOCHONDRIAL"/>
    <property type="match status" value="1"/>
</dbReference>
<dbReference type="PANTHER" id="PTHR43721">
    <property type="entry name" value="ELONGATION FACTOR TU-RELATED"/>
    <property type="match status" value="1"/>
</dbReference>
<dbReference type="Pfam" id="PF00009">
    <property type="entry name" value="GTP_EFTU"/>
    <property type="match status" value="1"/>
</dbReference>
<dbReference type="Pfam" id="PF03144">
    <property type="entry name" value="GTP_EFTU_D2"/>
    <property type="match status" value="1"/>
</dbReference>
<dbReference type="Pfam" id="PF03143">
    <property type="entry name" value="GTP_EFTU_D3"/>
    <property type="match status" value="1"/>
</dbReference>
<dbReference type="PRINTS" id="PR00315">
    <property type="entry name" value="ELONGATNFCT"/>
</dbReference>
<dbReference type="SUPFAM" id="SSF50465">
    <property type="entry name" value="EF-Tu/eEF-1alpha/eIF2-gamma C-terminal domain"/>
    <property type="match status" value="1"/>
</dbReference>
<dbReference type="SUPFAM" id="SSF52540">
    <property type="entry name" value="P-loop containing nucleoside triphosphate hydrolases"/>
    <property type="match status" value="1"/>
</dbReference>
<dbReference type="SUPFAM" id="SSF50447">
    <property type="entry name" value="Translation proteins"/>
    <property type="match status" value="1"/>
</dbReference>
<dbReference type="PROSITE" id="PS00301">
    <property type="entry name" value="G_TR_1"/>
    <property type="match status" value="1"/>
</dbReference>
<dbReference type="PROSITE" id="PS51722">
    <property type="entry name" value="G_TR_2"/>
    <property type="match status" value="1"/>
</dbReference>
<reference key="1">
    <citation type="journal article" date="2009" name="Environ. Microbiol.">
        <title>Contribution of mobile genetic elements to Desulfovibrio vulgaris genome plasticity.</title>
        <authorList>
            <person name="Walker C.B."/>
            <person name="Stolyar S."/>
            <person name="Chivian D."/>
            <person name="Pinel N."/>
            <person name="Gabster J.A."/>
            <person name="Dehal P.S."/>
            <person name="He Z."/>
            <person name="Yang Z.K."/>
            <person name="Yen H.C."/>
            <person name="Zhou J."/>
            <person name="Wall J.D."/>
            <person name="Hazen T.C."/>
            <person name="Arkin A.P."/>
            <person name="Stahl D.A."/>
        </authorList>
    </citation>
    <scope>NUCLEOTIDE SEQUENCE [LARGE SCALE GENOMIC DNA]</scope>
    <source>
        <strain>DP4</strain>
    </source>
</reference>
<comment type="function">
    <text evidence="2">GTP hydrolase that promotes the GTP-dependent binding of aminoacyl-tRNA to the A-site of ribosomes during protein biosynthesis.</text>
</comment>
<comment type="catalytic activity">
    <reaction evidence="2">
        <text>GTP + H2O = GDP + phosphate + H(+)</text>
        <dbReference type="Rhea" id="RHEA:19669"/>
        <dbReference type="ChEBI" id="CHEBI:15377"/>
        <dbReference type="ChEBI" id="CHEBI:15378"/>
        <dbReference type="ChEBI" id="CHEBI:37565"/>
        <dbReference type="ChEBI" id="CHEBI:43474"/>
        <dbReference type="ChEBI" id="CHEBI:58189"/>
        <dbReference type="EC" id="3.6.5.3"/>
    </reaction>
    <physiologicalReaction direction="left-to-right" evidence="2">
        <dbReference type="Rhea" id="RHEA:19670"/>
    </physiologicalReaction>
</comment>
<comment type="subunit">
    <text evidence="2">Monomer.</text>
</comment>
<comment type="subcellular location">
    <subcellularLocation>
        <location evidence="2">Cytoplasm</location>
    </subcellularLocation>
</comment>
<comment type="similarity">
    <text evidence="2">Belongs to the TRAFAC class translation factor GTPase superfamily. Classic translation factor GTPase family. EF-Tu/EF-1A subfamily.</text>
</comment>
<organism>
    <name type="scientific">Nitratidesulfovibrio vulgaris (strain DP4)</name>
    <name type="common">Desulfovibrio vulgaris</name>
    <dbReference type="NCBI Taxonomy" id="391774"/>
    <lineage>
        <taxon>Bacteria</taxon>
        <taxon>Pseudomonadati</taxon>
        <taxon>Thermodesulfobacteriota</taxon>
        <taxon>Desulfovibrionia</taxon>
        <taxon>Desulfovibrionales</taxon>
        <taxon>Desulfovibrionaceae</taxon>
        <taxon>Nitratidesulfovibrio</taxon>
    </lineage>
</organism>
<name>EFTU_NITV4</name>
<gene>
    <name evidence="2" type="primary">tuf</name>
    <name type="ordered locus">Dvul_0447</name>
</gene>
<keyword id="KW-0963">Cytoplasm</keyword>
<keyword id="KW-0251">Elongation factor</keyword>
<keyword id="KW-0342">GTP-binding</keyword>
<keyword id="KW-0378">Hydrolase</keyword>
<keyword id="KW-0460">Magnesium</keyword>
<keyword id="KW-0479">Metal-binding</keyword>
<keyword id="KW-0547">Nucleotide-binding</keyword>
<keyword id="KW-0648">Protein biosynthesis</keyword>
<sequence length="397" mass="43407">MGKEKFERKKPHVNIGTIGHIDHGKTTLTAAITKTAGLLGQGKFIAYDEIDKAPEEKERGITIATAHVEYETATRHYAHVDCPGHADYIKNMITGAAQMDGAIIVVAATDGPMPQTREHILLARQVGVPYIVVFLNKCDMVDDEELLELVELEVRELLTSYGFPGDDVPVVRGSALKALESDDPNSDACKPIRELLAACDSYIPEPQRDIDKPFLMPIEDVFSISGRGTVVTGRVERGVIKVGEEVEIVGIKDTTKSTCTGVEMFRKLLDQGQAGDNIGALLRGVKRDDVERGQVLAAPKSITPHRKFKAEVYVLSKEEGGRHTPFFSGYRPQFYFRTTDITGVITLEEGVEMVMPGDNATFNVELIAPIAMELGLRFAIREGGRTVGAGVVSEIVE</sequence>